<reference key="1">
    <citation type="journal article" date="2003" name="Proc. Natl. Acad. Sci. U.S.A.">
        <title>Reductive genome evolution in Buchnera aphidicola.</title>
        <authorList>
            <person name="van Ham R.C.H.J."/>
            <person name="Kamerbeek J."/>
            <person name="Palacios C."/>
            <person name="Rausell C."/>
            <person name="Abascal F."/>
            <person name="Bastolla U."/>
            <person name="Fernandez J.M."/>
            <person name="Jimenez L."/>
            <person name="Postigo M."/>
            <person name="Silva F.J."/>
            <person name="Tamames J."/>
            <person name="Viguera E."/>
            <person name="Latorre A."/>
            <person name="Valencia A."/>
            <person name="Moran F."/>
            <person name="Moya A."/>
        </authorList>
    </citation>
    <scope>NUCLEOTIDE SEQUENCE [LARGE SCALE GENOMIC DNA]</scope>
    <source>
        <strain>Bp</strain>
    </source>
</reference>
<organism>
    <name type="scientific">Buchnera aphidicola subsp. Baizongia pistaciae (strain Bp)</name>
    <dbReference type="NCBI Taxonomy" id="224915"/>
    <lineage>
        <taxon>Bacteria</taxon>
        <taxon>Pseudomonadati</taxon>
        <taxon>Pseudomonadota</taxon>
        <taxon>Gammaproteobacteria</taxon>
        <taxon>Enterobacterales</taxon>
        <taxon>Erwiniaceae</taxon>
        <taxon>Buchnera</taxon>
    </lineage>
</organism>
<name>DNAC_BUCBP</name>
<comment type="function">
    <text evidence="1">Required to load the replicative helix DnaB onto single-stranded (ss)DNA, to initiate chromosomal replication. DnaC alters the inter-domain and inter-subunit interactions of DnaB, inducing an open ring conformation that allows ssDNA to access the interior of the DnaB(6):DnaC(6) ring. Has ATPase activity only in the presence of DnaB and ssDNA. ssDNA binds to the central pore in the DnaB(6):DnaC(6) complex, making contacts with both subunits. It forms, in concert with DnaB protein and other prepriming proteins DnaT, N, N', N'' a prepriming protein complex on the specific site of the template DNA recognized by protein N' (By similarity).</text>
</comment>
<comment type="catalytic activity">
    <reaction evidence="1">
        <text>ATP + H2O = ADP + phosphate + H(+)</text>
        <dbReference type="Rhea" id="RHEA:13065"/>
        <dbReference type="ChEBI" id="CHEBI:15377"/>
        <dbReference type="ChEBI" id="CHEBI:15378"/>
        <dbReference type="ChEBI" id="CHEBI:30616"/>
        <dbReference type="ChEBI" id="CHEBI:43474"/>
        <dbReference type="ChEBI" id="CHEBI:456216"/>
    </reaction>
    <physiologicalReaction direction="left-to-right" evidence="1">
        <dbReference type="Rhea" id="RHEA:13066"/>
    </physiologicalReaction>
</comment>
<comment type="subunit">
    <text evidence="1">The helix loader is a DnaB(6):DnaC(6) complex with a crack opening large enough to allow ssDNA into the central cavity.</text>
</comment>
<comment type="similarity">
    <text evidence="2">Belongs to the DnaC family.</text>
</comment>
<gene>
    <name type="primary">dnaC</name>
    <name type="ordered locus">bbp_024</name>
</gene>
<keyword id="KW-0067">ATP-binding</keyword>
<keyword id="KW-0235">DNA replication</keyword>
<keyword id="KW-0238">DNA-binding</keyword>
<keyword id="KW-0378">Hydrolase</keyword>
<keyword id="KW-0547">Nucleotide-binding</keyword>
<keyword id="KW-0639">Primosome</keyword>
<keyword id="KW-1185">Reference proteome</keyword>
<sequence>MKNHIKFLKRLKCIVPKHIKPKFHNDEELLAWNQEQGRLSSEAILRKNKAMKMQRILGRSGIRELYMNCSFENYHIEHEGHKKVVIASKEYAHNFNKNMASFIFSGKPGTGKNHLASAIGNYLILNGKSVLIVTVADLMSNIKSTFNGNNNVTEERLLNNLSNVDLLMIDEIGMQIESRYEKVIINQIVDRRSSSKRSTGMLSNLDYRGLKILLGERVIDRMRLGNSLWLTFNWDSYRKKIHGNEF</sequence>
<accession>Q89B30</accession>
<evidence type="ECO:0000250" key="1">
    <source>
        <dbReference type="UniProtKB" id="P0AEF0"/>
    </source>
</evidence>
<evidence type="ECO:0000305" key="2"/>
<protein>
    <recommendedName>
        <fullName>Replicative helicase loader DnaC</fullName>
        <ecNumber evidence="1">3.6.4.-</ecNumber>
    </recommendedName>
    <alternativeName>
        <fullName>DNA replication protein DnaC</fullName>
    </alternativeName>
</protein>
<proteinExistence type="inferred from homology"/>
<feature type="chain" id="PRO_0000079953" description="Replicative helicase loader DnaC">
    <location>
        <begin position="1"/>
        <end position="246"/>
    </location>
</feature>
<feature type="site" description="Probably involved in the interaction with the DnaB protein" evidence="1">
    <location>
        <position position="69"/>
    </location>
</feature>
<dbReference type="EC" id="3.6.4.-" evidence="1"/>
<dbReference type="EMBL" id="AE016826">
    <property type="protein sequence ID" value="AAO26767.1"/>
    <property type="molecule type" value="Genomic_DNA"/>
</dbReference>
<dbReference type="RefSeq" id="WP_011091168.1">
    <property type="nucleotide sequence ID" value="NC_004545.1"/>
</dbReference>
<dbReference type="SMR" id="Q89B30"/>
<dbReference type="STRING" id="224915.bbp_024"/>
<dbReference type="KEGG" id="bab:bbp_024"/>
<dbReference type="eggNOG" id="COG1484">
    <property type="taxonomic scope" value="Bacteria"/>
</dbReference>
<dbReference type="HOGENOM" id="CLU_062999_3_1_6"/>
<dbReference type="OrthoDB" id="5956003at2"/>
<dbReference type="Proteomes" id="UP000000601">
    <property type="component" value="Chromosome"/>
</dbReference>
<dbReference type="GO" id="GO:1990077">
    <property type="term" value="C:primosome complex"/>
    <property type="evidence" value="ECO:0007669"/>
    <property type="project" value="UniProtKB-KW"/>
</dbReference>
<dbReference type="GO" id="GO:0005524">
    <property type="term" value="F:ATP binding"/>
    <property type="evidence" value="ECO:0007669"/>
    <property type="project" value="UniProtKB-KW"/>
</dbReference>
<dbReference type="GO" id="GO:0003677">
    <property type="term" value="F:DNA binding"/>
    <property type="evidence" value="ECO:0007669"/>
    <property type="project" value="UniProtKB-KW"/>
</dbReference>
<dbReference type="GO" id="GO:0016787">
    <property type="term" value="F:hydrolase activity"/>
    <property type="evidence" value="ECO:0007669"/>
    <property type="project" value="UniProtKB-KW"/>
</dbReference>
<dbReference type="GO" id="GO:0006269">
    <property type="term" value="P:DNA replication, synthesis of primer"/>
    <property type="evidence" value="ECO:0007669"/>
    <property type="project" value="UniProtKB-KW"/>
</dbReference>
<dbReference type="CDD" id="cd00009">
    <property type="entry name" value="AAA"/>
    <property type="match status" value="1"/>
</dbReference>
<dbReference type="Gene3D" id="3.40.50.300">
    <property type="entry name" value="P-loop containing nucleotide triphosphate hydrolases"/>
    <property type="match status" value="1"/>
</dbReference>
<dbReference type="InterPro" id="IPR028350">
    <property type="entry name" value="DNAC/IstB-like"/>
</dbReference>
<dbReference type="InterPro" id="IPR002611">
    <property type="entry name" value="IstB_ATP-bd"/>
</dbReference>
<dbReference type="InterPro" id="IPR027417">
    <property type="entry name" value="P-loop_NTPase"/>
</dbReference>
<dbReference type="NCBIfam" id="NF005931">
    <property type="entry name" value="PRK07952.1"/>
    <property type="match status" value="1"/>
</dbReference>
<dbReference type="PANTHER" id="PTHR30050:SF4">
    <property type="entry name" value="ATP-BINDING PROTEIN RV3427C IN INSERTION SEQUENCE-RELATED"/>
    <property type="match status" value="1"/>
</dbReference>
<dbReference type="PANTHER" id="PTHR30050">
    <property type="entry name" value="CHROMOSOMAL REPLICATION INITIATOR PROTEIN DNAA"/>
    <property type="match status" value="1"/>
</dbReference>
<dbReference type="Pfam" id="PF01695">
    <property type="entry name" value="IstB_IS21"/>
    <property type="match status" value="1"/>
</dbReference>
<dbReference type="PIRSF" id="PIRSF003073">
    <property type="entry name" value="DNAC_TnpB_IstB"/>
    <property type="match status" value="1"/>
</dbReference>
<dbReference type="SUPFAM" id="SSF52540">
    <property type="entry name" value="P-loop containing nucleoside triphosphate hydrolases"/>
    <property type="match status" value="1"/>
</dbReference>